<dbReference type="EMBL" id="AY079050">
    <property type="protein sequence ID" value="AAL82731.1"/>
    <property type="molecule type" value="Genomic_DNA"/>
</dbReference>
<dbReference type="EMBL" id="AK009329">
    <property type="protein sequence ID" value="BAB26221.1"/>
    <property type="molecule type" value="mRNA"/>
</dbReference>
<dbReference type="EMBL" id="AK009441">
    <property type="protein sequence ID" value="BAB26290.1"/>
    <property type="molecule type" value="mRNA"/>
</dbReference>
<dbReference type="EMBL" id="AK009531">
    <property type="protein sequence ID" value="BAB26343.1"/>
    <property type="molecule type" value="mRNA"/>
</dbReference>
<dbReference type="EMBL" id="AK009562">
    <property type="protein sequence ID" value="BAB26360.1"/>
    <property type="molecule type" value="mRNA"/>
</dbReference>
<dbReference type="EMBL" id="AK009580">
    <property type="protein sequence ID" value="BAB26372.1"/>
    <property type="molecule type" value="mRNA"/>
</dbReference>
<dbReference type="EMBL" id="AK009629">
    <property type="protein sequence ID" value="BAB26401.1"/>
    <property type="molecule type" value="mRNA"/>
</dbReference>
<dbReference type="EMBL" id="AK009695">
    <property type="protein sequence ID" value="BAB26444.1"/>
    <property type="molecule type" value="mRNA"/>
</dbReference>
<dbReference type="EMBL" id="AK009803">
    <property type="protein sequence ID" value="BAB26513.1"/>
    <property type="molecule type" value="mRNA"/>
</dbReference>
<dbReference type="EMBL" id="AK009835">
    <property type="protein sequence ID" value="BAB26533.1"/>
    <property type="molecule type" value="mRNA"/>
</dbReference>
<dbReference type="EMBL" id="AK010012">
    <property type="protein sequence ID" value="BAB26642.1"/>
    <property type="molecule type" value="mRNA"/>
</dbReference>
<dbReference type="EMBL" id="AK010051">
    <property type="protein sequence ID" value="BAB26667.1"/>
    <property type="molecule type" value="mRNA"/>
</dbReference>
<dbReference type="EMBL" id="AK010115">
    <property type="protein sequence ID" value="BAB26710.1"/>
    <property type="molecule type" value="mRNA"/>
</dbReference>
<dbReference type="EMBL" id="AK010145">
    <property type="protein sequence ID" value="BAB26730.1"/>
    <property type="molecule type" value="mRNA"/>
</dbReference>
<dbReference type="EMBL" id="AL845461">
    <property type="status" value="NOT_ANNOTATED_CDS"/>
    <property type="molecule type" value="Genomic_DNA"/>
</dbReference>
<dbReference type="EMBL" id="BC115526">
    <property type="protein sequence ID" value="AAI15527.1"/>
    <property type="molecule type" value="mRNA"/>
</dbReference>
<dbReference type="EMBL" id="BC115527">
    <property type="protein sequence ID" value="AAI15528.1"/>
    <property type="molecule type" value="mRNA"/>
</dbReference>
<dbReference type="CCDS" id="CCDS16926.1"/>
<dbReference type="RefSeq" id="NP_080266.2">
    <property type="nucleotide sequence ID" value="NM_025990.5"/>
</dbReference>
<dbReference type="SMR" id="Q9CQX3"/>
<dbReference type="FunCoup" id="Q9CQX3">
    <property type="interactions" value="85"/>
</dbReference>
<dbReference type="STRING" id="10090.ENSMUSP00000028986"/>
<dbReference type="GlyGen" id="Q9CQX3">
    <property type="glycosylation" value="1 site"/>
</dbReference>
<dbReference type="PaxDb" id="10090-ENSMUSP00000028986"/>
<dbReference type="ProteomicsDB" id="265227"/>
<dbReference type="DNASU" id="67135"/>
<dbReference type="Ensembl" id="ENSMUST00000028986.3">
    <property type="protein sequence ID" value="ENSMUSP00000028986.3"/>
    <property type="gene ID" value="ENSMUSG00000027484.3"/>
</dbReference>
<dbReference type="GeneID" id="67135"/>
<dbReference type="KEGG" id="mmu:67135"/>
<dbReference type="UCSC" id="uc008niv.2">
    <property type="organism name" value="mouse"/>
</dbReference>
<dbReference type="AGR" id="MGI:1914385"/>
<dbReference type="CTD" id="67135"/>
<dbReference type="MGI" id="MGI:1914385">
    <property type="gene designation" value="Bpifa5"/>
</dbReference>
<dbReference type="VEuPathDB" id="HostDB:ENSMUSG00000027484"/>
<dbReference type="eggNOG" id="ENOG502SR58">
    <property type="taxonomic scope" value="Eukaryota"/>
</dbReference>
<dbReference type="GeneTree" id="ENSGT01100000263546"/>
<dbReference type="HOGENOM" id="CLU_095915_0_0_1"/>
<dbReference type="InParanoid" id="Q9CQX3"/>
<dbReference type="OMA" id="PREMFLV"/>
<dbReference type="OrthoDB" id="9835719at2759"/>
<dbReference type="PhylomeDB" id="Q9CQX3"/>
<dbReference type="TreeFam" id="TF337052"/>
<dbReference type="BioGRID-ORCS" id="67135">
    <property type="hits" value="2 hits in 76 CRISPR screens"/>
</dbReference>
<dbReference type="PRO" id="PR:Q9CQX3"/>
<dbReference type="Proteomes" id="UP000000589">
    <property type="component" value="Chromosome 2"/>
</dbReference>
<dbReference type="RNAct" id="Q9CQX3">
    <property type="molecule type" value="protein"/>
</dbReference>
<dbReference type="Bgee" id="ENSMUSG00000027484">
    <property type="expression patterns" value="Expressed in gastrula and 6 other cell types or tissues"/>
</dbReference>
<dbReference type="GO" id="GO:0005576">
    <property type="term" value="C:extracellular region"/>
    <property type="evidence" value="ECO:0007669"/>
    <property type="project" value="UniProtKB-SubCell"/>
</dbReference>
<dbReference type="GO" id="GO:0008289">
    <property type="term" value="F:lipid binding"/>
    <property type="evidence" value="ECO:0007669"/>
    <property type="project" value="InterPro"/>
</dbReference>
<dbReference type="Gene3D" id="3.15.10.10">
    <property type="entry name" value="Bactericidal permeability-increasing protein, domain 1"/>
    <property type="match status" value="1"/>
</dbReference>
<dbReference type="InterPro" id="IPR017943">
    <property type="entry name" value="Bactericidal_perm-incr_a/b_dom"/>
</dbReference>
<dbReference type="InterPro" id="IPR051902">
    <property type="entry name" value="BPI_fold-superfamily_member"/>
</dbReference>
<dbReference type="InterPro" id="IPR017942">
    <property type="entry name" value="Lipid-bd_serum_glycop_N"/>
</dbReference>
<dbReference type="PANTHER" id="PTHR47015">
    <property type="entry name" value="BPI FOLD-CONTAINING FAMILY A MEMBER 1"/>
    <property type="match status" value="1"/>
</dbReference>
<dbReference type="PANTHER" id="PTHR47015:SF2">
    <property type="entry name" value="BPI FOLD-CONTAINING FAMILY A MEMBER 5"/>
    <property type="match status" value="1"/>
</dbReference>
<dbReference type="Pfam" id="PF01273">
    <property type="entry name" value="LBP_BPI_CETP"/>
    <property type="match status" value="1"/>
</dbReference>
<dbReference type="SUPFAM" id="SSF55394">
    <property type="entry name" value="Bactericidal permeability-increasing protein, BPI"/>
    <property type="match status" value="1"/>
</dbReference>
<accession>Q9CQX3</accession>
<accession>A2ARM4</accession>
<accession>Q14BY9</accession>
<accession>Q8CIW0</accession>
<accession>Q9D6P0</accession>
<accession>Q9D794</accession>
<proteinExistence type="evidence at transcript level"/>
<keyword id="KW-1015">Disulfide bond</keyword>
<keyword id="KW-1185">Reference proteome</keyword>
<keyword id="KW-0964">Secreted</keyword>
<keyword id="KW-0732">Signal</keyword>
<sequence length="270" mass="29175">MFLAGSFIVLCGLLAQSTAQLAGLPYPLGQDLPMSMGHCRSLHVGQTLPYYGVTPVVSTYPSDHLDRNFRDAFRHGLLSGGILSFLEHIPLLNYVRPTGSNAGGLVGVLGKVISSIPLLNNILDIRVTNPQLLEIGLVQSYDFHRLYVTIPLGFDLRVNTLVVGSLLELSVKLDVTAEVYAVRDSYGRSRLVIGDCIYPPGSLRISLLNRLGPLQNLIDSLTDILTRVIPGLVQGVVCPLVNGVLSLLDVTLAHDVADALLRGVQFVIKT</sequence>
<gene>
    <name type="primary">Bpifa5</name>
    <name type="synonym">Pluncl</name>
    <name type="synonym">Splunc5</name>
</gene>
<feature type="signal peptide" evidence="2">
    <location>
        <begin position="1"/>
        <end position="19"/>
    </location>
</feature>
<feature type="chain" id="PRO_0000017189" description="BPI fold-containing family A member 5">
    <location>
        <begin position="20"/>
        <end position="270"/>
    </location>
</feature>
<feature type="disulfide bond" evidence="1">
    <location>
        <begin position="196"/>
        <end position="238"/>
    </location>
</feature>
<feature type="sequence conflict" description="In Ref. 2; BAB26290." evidence="4" ref="2">
    <original>D</original>
    <variation>Y</variation>
    <location>
        <position position="31"/>
    </location>
</feature>
<feature type="sequence conflict" description="In Ref. 1; AAL82731." evidence="4" ref="1">
    <original>L</original>
    <variation>P</variation>
    <location>
        <position position="156"/>
    </location>
</feature>
<feature type="sequence conflict" description="In Ref. 1; AAL82731." evidence="4" ref="1">
    <original>S</original>
    <variation>G</variation>
    <location>
        <position position="220"/>
    </location>
</feature>
<feature type="sequence conflict" description="In Ref. 1; AAL82731 and 3; AAI15527/AAI15528." evidence="4" ref="1 3">
    <original>T</original>
    <variation>A</variation>
    <location>
        <position position="270"/>
    </location>
</feature>
<organism>
    <name type="scientific">Mus musculus</name>
    <name type="common">Mouse</name>
    <dbReference type="NCBI Taxonomy" id="10090"/>
    <lineage>
        <taxon>Eukaryota</taxon>
        <taxon>Metazoa</taxon>
        <taxon>Chordata</taxon>
        <taxon>Craniata</taxon>
        <taxon>Vertebrata</taxon>
        <taxon>Euteleostomi</taxon>
        <taxon>Mammalia</taxon>
        <taxon>Eutheria</taxon>
        <taxon>Euarchontoglires</taxon>
        <taxon>Glires</taxon>
        <taxon>Rodentia</taxon>
        <taxon>Myomorpha</taxon>
        <taxon>Muroidea</taxon>
        <taxon>Muridae</taxon>
        <taxon>Murinae</taxon>
        <taxon>Mus</taxon>
        <taxon>Mus</taxon>
    </lineage>
</organism>
<protein>
    <recommendedName>
        <fullName>BPI fold-containing family A member 5</fullName>
    </recommendedName>
    <alternativeName>
        <fullName>BPI fold-containing family A member Pluncl</fullName>
    </alternativeName>
    <alternativeName>
        <fullName>Palate lung and nasal carcinoma-like protein</fullName>
    </alternativeName>
    <alternativeName>
        <fullName>Short palate lung and nasal clone protein 5</fullName>
    </alternativeName>
    <alternativeName>
        <fullName>Tongue plunc-like protein</fullName>
        <shortName>TPL</shortName>
    </alternativeName>
</protein>
<name>BPIA5_MOUSE</name>
<reference key="1">
    <citation type="journal article" date="2004" name="Genomics">
        <title>Cloning and expression of a mouse member of the PLUNC protein family exclusively expressed in tongue epithelium.</title>
        <authorList>
            <person name="LeClair E.E."/>
            <person name="Nomellini V."/>
            <person name="Bahena M."/>
            <person name="Singleton V."/>
            <person name="Bingle L."/>
            <person name="Craven C.J."/>
            <person name="Bingle C.D."/>
        </authorList>
    </citation>
    <scope>NUCLEOTIDE SEQUENCE [GENOMIC DNA]</scope>
    <scope>FUNCTION</scope>
    <scope>TISSUE SPECIFICITY</scope>
    <scope>DEVELOPMENTAL STAGE</scope>
    <source>
        <strain>129S6/SvEvTac</strain>
    </source>
</reference>
<reference key="2">
    <citation type="journal article" date="2005" name="Science">
        <title>The transcriptional landscape of the mammalian genome.</title>
        <authorList>
            <person name="Carninci P."/>
            <person name="Kasukawa T."/>
            <person name="Katayama S."/>
            <person name="Gough J."/>
            <person name="Frith M.C."/>
            <person name="Maeda N."/>
            <person name="Oyama R."/>
            <person name="Ravasi T."/>
            <person name="Lenhard B."/>
            <person name="Wells C."/>
            <person name="Kodzius R."/>
            <person name="Shimokawa K."/>
            <person name="Bajic V.B."/>
            <person name="Brenner S.E."/>
            <person name="Batalov S."/>
            <person name="Forrest A.R."/>
            <person name="Zavolan M."/>
            <person name="Davis M.J."/>
            <person name="Wilming L.G."/>
            <person name="Aidinis V."/>
            <person name="Allen J.E."/>
            <person name="Ambesi-Impiombato A."/>
            <person name="Apweiler R."/>
            <person name="Aturaliya R.N."/>
            <person name="Bailey T.L."/>
            <person name="Bansal M."/>
            <person name="Baxter L."/>
            <person name="Beisel K.W."/>
            <person name="Bersano T."/>
            <person name="Bono H."/>
            <person name="Chalk A.M."/>
            <person name="Chiu K.P."/>
            <person name="Choudhary V."/>
            <person name="Christoffels A."/>
            <person name="Clutterbuck D.R."/>
            <person name="Crowe M.L."/>
            <person name="Dalla E."/>
            <person name="Dalrymple B.P."/>
            <person name="de Bono B."/>
            <person name="Della Gatta G."/>
            <person name="di Bernardo D."/>
            <person name="Down T."/>
            <person name="Engstrom P."/>
            <person name="Fagiolini M."/>
            <person name="Faulkner G."/>
            <person name="Fletcher C.F."/>
            <person name="Fukushima T."/>
            <person name="Furuno M."/>
            <person name="Futaki S."/>
            <person name="Gariboldi M."/>
            <person name="Georgii-Hemming P."/>
            <person name="Gingeras T.R."/>
            <person name="Gojobori T."/>
            <person name="Green R.E."/>
            <person name="Gustincich S."/>
            <person name="Harbers M."/>
            <person name="Hayashi Y."/>
            <person name="Hensch T.K."/>
            <person name="Hirokawa N."/>
            <person name="Hill D."/>
            <person name="Huminiecki L."/>
            <person name="Iacono M."/>
            <person name="Ikeo K."/>
            <person name="Iwama A."/>
            <person name="Ishikawa T."/>
            <person name="Jakt M."/>
            <person name="Kanapin A."/>
            <person name="Katoh M."/>
            <person name="Kawasawa Y."/>
            <person name="Kelso J."/>
            <person name="Kitamura H."/>
            <person name="Kitano H."/>
            <person name="Kollias G."/>
            <person name="Krishnan S.P."/>
            <person name="Kruger A."/>
            <person name="Kummerfeld S.K."/>
            <person name="Kurochkin I.V."/>
            <person name="Lareau L.F."/>
            <person name="Lazarevic D."/>
            <person name="Lipovich L."/>
            <person name="Liu J."/>
            <person name="Liuni S."/>
            <person name="McWilliam S."/>
            <person name="Madan Babu M."/>
            <person name="Madera M."/>
            <person name="Marchionni L."/>
            <person name="Matsuda H."/>
            <person name="Matsuzawa S."/>
            <person name="Miki H."/>
            <person name="Mignone F."/>
            <person name="Miyake S."/>
            <person name="Morris K."/>
            <person name="Mottagui-Tabar S."/>
            <person name="Mulder N."/>
            <person name="Nakano N."/>
            <person name="Nakauchi H."/>
            <person name="Ng P."/>
            <person name="Nilsson R."/>
            <person name="Nishiguchi S."/>
            <person name="Nishikawa S."/>
            <person name="Nori F."/>
            <person name="Ohara O."/>
            <person name="Okazaki Y."/>
            <person name="Orlando V."/>
            <person name="Pang K.C."/>
            <person name="Pavan W.J."/>
            <person name="Pavesi G."/>
            <person name="Pesole G."/>
            <person name="Petrovsky N."/>
            <person name="Piazza S."/>
            <person name="Reed J."/>
            <person name="Reid J.F."/>
            <person name="Ring B.Z."/>
            <person name="Ringwald M."/>
            <person name="Rost B."/>
            <person name="Ruan Y."/>
            <person name="Salzberg S.L."/>
            <person name="Sandelin A."/>
            <person name="Schneider C."/>
            <person name="Schoenbach C."/>
            <person name="Sekiguchi K."/>
            <person name="Semple C.A."/>
            <person name="Seno S."/>
            <person name="Sessa L."/>
            <person name="Sheng Y."/>
            <person name="Shibata Y."/>
            <person name="Shimada H."/>
            <person name="Shimada K."/>
            <person name="Silva D."/>
            <person name="Sinclair B."/>
            <person name="Sperling S."/>
            <person name="Stupka E."/>
            <person name="Sugiura K."/>
            <person name="Sultana R."/>
            <person name="Takenaka Y."/>
            <person name="Taki K."/>
            <person name="Tammoja K."/>
            <person name="Tan S.L."/>
            <person name="Tang S."/>
            <person name="Taylor M.S."/>
            <person name="Tegner J."/>
            <person name="Teichmann S.A."/>
            <person name="Ueda H.R."/>
            <person name="van Nimwegen E."/>
            <person name="Verardo R."/>
            <person name="Wei C.L."/>
            <person name="Yagi K."/>
            <person name="Yamanishi H."/>
            <person name="Zabarovsky E."/>
            <person name="Zhu S."/>
            <person name="Zimmer A."/>
            <person name="Hide W."/>
            <person name="Bult C."/>
            <person name="Grimmond S.M."/>
            <person name="Teasdale R.D."/>
            <person name="Liu E.T."/>
            <person name="Brusic V."/>
            <person name="Quackenbush J."/>
            <person name="Wahlestedt C."/>
            <person name="Mattick J.S."/>
            <person name="Hume D.A."/>
            <person name="Kai C."/>
            <person name="Sasaki D."/>
            <person name="Tomaru Y."/>
            <person name="Fukuda S."/>
            <person name="Kanamori-Katayama M."/>
            <person name="Suzuki M."/>
            <person name="Aoki J."/>
            <person name="Arakawa T."/>
            <person name="Iida J."/>
            <person name="Imamura K."/>
            <person name="Itoh M."/>
            <person name="Kato T."/>
            <person name="Kawaji H."/>
            <person name="Kawagashira N."/>
            <person name="Kawashima T."/>
            <person name="Kojima M."/>
            <person name="Kondo S."/>
            <person name="Konno H."/>
            <person name="Nakano K."/>
            <person name="Ninomiya N."/>
            <person name="Nishio T."/>
            <person name="Okada M."/>
            <person name="Plessy C."/>
            <person name="Shibata K."/>
            <person name="Shiraki T."/>
            <person name="Suzuki S."/>
            <person name="Tagami M."/>
            <person name="Waki K."/>
            <person name="Watahiki A."/>
            <person name="Okamura-Oho Y."/>
            <person name="Suzuki H."/>
            <person name="Kawai J."/>
            <person name="Hayashizaki Y."/>
        </authorList>
    </citation>
    <scope>NUCLEOTIDE SEQUENCE [LARGE SCALE MRNA]</scope>
    <source>
        <strain>C57BL/6J</strain>
        <tissue>Tongue</tissue>
    </source>
</reference>
<reference key="3">
    <citation type="journal article" date="2009" name="PLoS Biol.">
        <title>Lineage-specific biology revealed by a finished genome assembly of the mouse.</title>
        <authorList>
            <person name="Church D.M."/>
            <person name="Goodstadt L."/>
            <person name="Hillier L.W."/>
            <person name="Zody M.C."/>
            <person name="Goldstein S."/>
            <person name="She X."/>
            <person name="Bult C.J."/>
            <person name="Agarwala R."/>
            <person name="Cherry J.L."/>
            <person name="DiCuccio M."/>
            <person name="Hlavina W."/>
            <person name="Kapustin Y."/>
            <person name="Meric P."/>
            <person name="Maglott D."/>
            <person name="Birtle Z."/>
            <person name="Marques A.C."/>
            <person name="Graves T."/>
            <person name="Zhou S."/>
            <person name="Teague B."/>
            <person name="Potamousis K."/>
            <person name="Churas C."/>
            <person name="Place M."/>
            <person name="Herschleb J."/>
            <person name="Runnheim R."/>
            <person name="Forrest D."/>
            <person name="Amos-Landgraf J."/>
            <person name="Schwartz D.C."/>
            <person name="Cheng Z."/>
            <person name="Lindblad-Toh K."/>
            <person name="Eichler E.E."/>
            <person name="Ponting C.P."/>
        </authorList>
    </citation>
    <scope>NUCLEOTIDE SEQUENCE [LARGE SCALE GENOMIC DNA]</scope>
    <source>
        <strain>C57BL/6J</strain>
    </source>
</reference>
<reference key="4">
    <citation type="journal article" date="2004" name="Genome Res.">
        <title>The status, quality, and expansion of the NIH full-length cDNA project: the Mammalian Gene Collection (MGC).</title>
        <authorList>
            <consortium name="The MGC Project Team"/>
        </authorList>
    </citation>
    <scope>NUCLEOTIDE SEQUENCE [LARGE SCALE MRNA]</scope>
</reference>
<evidence type="ECO:0000250" key="1"/>
<evidence type="ECO:0000255" key="2"/>
<evidence type="ECO:0000269" key="3">
    <source>
    </source>
</evidence>
<evidence type="ECO:0000305" key="4"/>
<comment type="function">
    <text evidence="3">May play a role in innate immunity in the oral cavity.</text>
</comment>
<comment type="subcellular location">
    <subcellularLocation>
        <location evidence="4">Secreted</location>
    </subcellularLocation>
</comment>
<comment type="tissue specificity">
    <text evidence="3">Expressed in interpapillar epithelium of the anterior part of the tongue.</text>
</comment>
<comment type="developmental stage">
    <text evidence="3">Expressed in juvenile and adult mice from postnatal day 2.</text>
</comment>
<comment type="similarity">
    <text evidence="4">Belongs to the BPI/LBP/Plunc superfamily. Plunc family.</text>
</comment>